<protein>
    <recommendedName>
        <fullName evidence="1">Carbohydrate deacetylase</fullName>
        <ecNumber evidence="1">3.5.1.-</ecNumber>
    </recommendedName>
</protein>
<name>YDJC_XENLA</name>
<accession>Q569M2</accession>
<feature type="chain" id="PRO_0000328777" description="Carbohydrate deacetylase">
    <location>
        <begin position="1"/>
        <end position="308"/>
    </location>
</feature>
<feature type="active site" description="Proton acceptor" evidence="1">
    <location>
        <position position="14"/>
    </location>
</feature>
<feature type="binding site" evidence="1">
    <location>
        <position position="15"/>
    </location>
    <ligand>
        <name>Mg(2+)</name>
        <dbReference type="ChEBI" id="CHEBI:18420"/>
    </ligand>
</feature>
<feature type="binding site" evidence="1">
    <location>
        <position position="135"/>
    </location>
    <ligand>
        <name>Mg(2+)</name>
        <dbReference type="ChEBI" id="CHEBI:18420"/>
    </ligand>
</feature>
<gene>
    <name type="primary">ydjc</name>
</gene>
<comment type="function">
    <text evidence="1">Probably catalyzes the deacetylation of acetylated carbohydrates an important step in the degradation of oligosaccharides.</text>
</comment>
<comment type="cofactor">
    <cofactor evidence="1">
        <name>Mg(2+)</name>
        <dbReference type="ChEBI" id="CHEBI:18420"/>
    </cofactor>
</comment>
<comment type="similarity">
    <text evidence="2">Belongs to the YdjC deacetylase family.</text>
</comment>
<organism>
    <name type="scientific">Xenopus laevis</name>
    <name type="common">African clawed frog</name>
    <dbReference type="NCBI Taxonomy" id="8355"/>
    <lineage>
        <taxon>Eukaryota</taxon>
        <taxon>Metazoa</taxon>
        <taxon>Chordata</taxon>
        <taxon>Craniata</taxon>
        <taxon>Vertebrata</taxon>
        <taxon>Euteleostomi</taxon>
        <taxon>Amphibia</taxon>
        <taxon>Batrachia</taxon>
        <taxon>Anura</taxon>
        <taxon>Pipoidea</taxon>
        <taxon>Pipidae</taxon>
        <taxon>Xenopodinae</taxon>
        <taxon>Xenopus</taxon>
        <taxon>Xenopus</taxon>
    </lineage>
</organism>
<proteinExistence type="evidence at transcript level"/>
<keyword id="KW-0119">Carbohydrate metabolism</keyword>
<keyword id="KW-0378">Hydrolase</keyword>
<keyword id="KW-0460">Magnesium</keyword>
<keyword id="KW-0479">Metal-binding</keyword>
<keyword id="KW-1185">Reference proteome</keyword>
<sequence length="308" mass="34451">MSLDPRIKLVVTGDDFGYCPHRDKGIVDCFHAKVVTNVSLIINGSSAASAASLARRYNIPIGLHANLSEGFPVCAELKQNSSLINCQGFFHGKMGIRKMLSQGLLNMSEVRKELCAQIKLFLELTGMNPQHMDSHQHVHVLPGIREVFAQVLEEHRIHYTRIPVELGLYRCTWIPDTLMEFYKGIEKDALNTVEIFRKHGIRWPDLYIGLSTMGKNMSAYNIQEAIRYGVCSWQSTISTLPDINNSVSIELMTHPGYPSSPEEGGCGEGPDDFSQSLDRLHELEVLKSAPLRNFFLANGVQLCAFTDL</sequence>
<evidence type="ECO:0000250" key="1">
    <source>
        <dbReference type="UniProtKB" id="Q53WD3"/>
    </source>
</evidence>
<evidence type="ECO:0000305" key="2"/>
<reference key="1">
    <citation type="submission" date="2005-04" db="EMBL/GenBank/DDBJ databases">
        <authorList>
            <consortium name="NIH - Xenopus Gene Collection (XGC) project"/>
        </authorList>
    </citation>
    <scope>NUCLEOTIDE SEQUENCE [LARGE SCALE MRNA]</scope>
    <source>
        <tissue>Egg</tissue>
    </source>
</reference>
<dbReference type="EC" id="3.5.1.-" evidence="1"/>
<dbReference type="EMBL" id="BC092390">
    <property type="protein sequence ID" value="AAH92390.1"/>
    <property type="molecule type" value="mRNA"/>
</dbReference>
<dbReference type="RefSeq" id="NP_001089361.1">
    <property type="nucleotide sequence ID" value="NM_001095892.1"/>
</dbReference>
<dbReference type="SMR" id="Q569M2"/>
<dbReference type="DNASU" id="734411"/>
<dbReference type="GeneID" id="734411"/>
<dbReference type="KEGG" id="xla:734411"/>
<dbReference type="AGR" id="Xenbase:XB-GENE-941280"/>
<dbReference type="CTD" id="734411"/>
<dbReference type="OMA" id="GLHNCDW"/>
<dbReference type="OrthoDB" id="8908051at2759"/>
<dbReference type="Proteomes" id="UP000186698">
    <property type="component" value="Chromosome 1L"/>
</dbReference>
<dbReference type="Bgee" id="734411">
    <property type="expression patterns" value="Expressed in oocyte and 19 other cell types or tissues"/>
</dbReference>
<dbReference type="GO" id="GO:0019213">
    <property type="term" value="F:deacetylase activity"/>
    <property type="evidence" value="ECO:0000318"/>
    <property type="project" value="GO_Central"/>
</dbReference>
<dbReference type="GO" id="GO:0016787">
    <property type="term" value="F:hydrolase activity"/>
    <property type="evidence" value="ECO:0007669"/>
    <property type="project" value="UniProtKB-KW"/>
</dbReference>
<dbReference type="GO" id="GO:0000287">
    <property type="term" value="F:magnesium ion binding"/>
    <property type="evidence" value="ECO:0000250"/>
    <property type="project" value="UniProtKB"/>
</dbReference>
<dbReference type="GO" id="GO:0005975">
    <property type="term" value="P:carbohydrate metabolic process"/>
    <property type="evidence" value="ECO:0007669"/>
    <property type="project" value="InterPro"/>
</dbReference>
<dbReference type="CDD" id="cd10806">
    <property type="entry name" value="YdjC_like_2"/>
    <property type="match status" value="1"/>
</dbReference>
<dbReference type="FunFam" id="3.20.20.370:FF:000006">
    <property type="entry name" value="YdjC chitooligosaccharide deacetylase homolog"/>
    <property type="match status" value="1"/>
</dbReference>
<dbReference type="Gene3D" id="3.20.20.370">
    <property type="entry name" value="Glycoside hydrolase/deacetylase"/>
    <property type="match status" value="1"/>
</dbReference>
<dbReference type="InterPro" id="IPR011330">
    <property type="entry name" value="Glyco_hydro/deAcase_b/a-brl"/>
</dbReference>
<dbReference type="InterPro" id="IPR006879">
    <property type="entry name" value="YdjC-like"/>
</dbReference>
<dbReference type="PANTHER" id="PTHR31609:SF1">
    <property type="entry name" value="CARBOHYDRATE DEACETYLASE"/>
    <property type="match status" value="1"/>
</dbReference>
<dbReference type="PANTHER" id="PTHR31609">
    <property type="entry name" value="YDJC DEACETYLASE FAMILY MEMBER"/>
    <property type="match status" value="1"/>
</dbReference>
<dbReference type="Pfam" id="PF04794">
    <property type="entry name" value="YdjC"/>
    <property type="match status" value="1"/>
</dbReference>
<dbReference type="SUPFAM" id="SSF88713">
    <property type="entry name" value="Glycoside hydrolase/deacetylase"/>
    <property type="match status" value="1"/>
</dbReference>